<keyword id="KW-0472">Membrane</keyword>
<keyword id="KW-1185">Reference proteome</keyword>
<keyword id="KW-0732">Signal</keyword>
<keyword id="KW-0812">Transmembrane</keyword>
<keyword id="KW-1133">Transmembrane helix</keyword>
<feature type="signal peptide" evidence="1">
    <location>
        <begin position="1"/>
        <end position="21"/>
    </location>
</feature>
<feature type="chain" id="PRO_0000411098" description="Transmembrane protein 35B">
    <location>
        <begin position="22"/>
        <end position="152"/>
    </location>
</feature>
<feature type="transmembrane region" description="Helical" evidence="1">
    <location>
        <begin position="62"/>
        <end position="82"/>
    </location>
</feature>
<feature type="transmembrane region" description="Helical" evidence="1">
    <location>
        <begin position="85"/>
        <end position="105"/>
    </location>
</feature>
<feature type="transmembrane region" description="Helical" evidence="1">
    <location>
        <begin position="111"/>
        <end position="131"/>
    </location>
</feature>
<evidence type="ECO:0000255" key="1"/>
<evidence type="ECO:0000305" key="2"/>
<evidence type="ECO:0000312" key="3">
    <source>
        <dbReference type="RGD" id="2319741"/>
    </source>
</evidence>
<proteinExistence type="inferred from homology"/>
<reference key="1">
    <citation type="journal article" date="2004" name="Nature">
        <title>Genome sequence of the Brown Norway rat yields insights into mammalian evolution.</title>
        <authorList>
            <person name="Gibbs R.A."/>
            <person name="Weinstock G.M."/>
            <person name="Metzker M.L."/>
            <person name="Muzny D.M."/>
            <person name="Sodergren E.J."/>
            <person name="Scherer S."/>
            <person name="Scott G."/>
            <person name="Steffen D."/>
            <person name="Worley K.C."/>
            <person name="Burch P.E."/>
            <person name="Okwuonu G."/>
            <person name="Hines S."/>
            <person name="Lewis L."/>
            <person name="Deramo C."/>
            <person name="Delgado O."/>
            <person name="Dugan-Rocha S."/>
            <person name="Miner G."/>
            <person name="Morgan M."/>
            <person name="Hawes A."/>
            <person name="Gill R."/>
            <person name="Holt R.A."/>
            <person name="Adams M.D."/>
            <person name="Amanatides P.G."/>
            <person name="Baden-Tillson H."/>
            <person name="Barnstead M."/>
            <person name="Chin S."/>
            <person name="Evans C.A."/>
            <person name="Ferriera S."/>
            <person name="Fosler C."/>
            <person name="Glodek A."/>
            <person name="Gu Z."/>
            <person name="Jennings D."/>
            <person name="Kraft C.L."/>
            <person name="Nguyen T."/>
            <person name="Pfannkoch C.M."/>
            <person name="Sitter C."/>
            <person name="Sutton G.G."/>
            <person name="Venter J.C."/>
            <person name="Woodage T."/>
            <person name="Smith D."/>
            <person name="Lee H.-M."/>
            <person name="Gustafson E."/>
            <person name="Cahill P."/>
            <person name="Kana A."/>
            <person name="Doucette-Stamm L."/>
            <person name="Weinstock K."/>
            <person name="Fechtel K."/>
            <person name="Weiss R.B."/>
            <person name="Dunn D.M."/>
            <person name="Green E.D."/>
            <person name="Blakesley R.W."/>
            <person name="Bouffard G.G."/>
            <person name="De Jong P.J."/>
            <person name="Osoegawa K."/>
            <person name="Zhu B."/>
            <person name="Marra M."/>
            <person name="Schein J."/>
            <person name="Bosdet I."/>
            <person name="Fjell C."/>
            <person name="Jones S."/>
            <person name="Krzywinski M."/>
            <person name="Mathewson C."/>
            <person name="Siddiqui A."/>
            <person name="Wye N."/>
            <person name="McPherson J."/>
            <person name="Zhao S."/>
            <person name="Fraser C.M."/>
            <person name="Shetty J."/>
            <person name="Shatsman S."/>
            <person name="Geer K."/>
            <person name="Chen Y."/>
            <person name="Abramzon S."/>
            <person name="Nierman W.C."/>
            <person name="Havlak P.H."/>
            <person name="Chen R."/>
            <person name="Durbin K.J."/>
            <person name="Egan A."/>
            <person name="Ren Y."/>
            <person name="Song X.-Z."/>
            <person name="Li B."/>
            <person name="Liu Y."/>
            <person name="Qin X."/>
            <person name="Cawley S."/>
            <person name="Cooney A.J."/>
            <person name="D'Souza L.M."/>
            <person name="Martin K."/>
            <person name="Wu J.Q."/>
            <person name="Gonzalez-Garay M.L."/>
            <person name="Jackson A.R."/>
            <person name="Kalafus K.J."/>
            <person name="McLeod M.P."/>
            <person name="Milosavljevic A."/>
            <person name="Virk D."/>
            <person name="Volkov A."/>
            <person name="Wheeler D.A."/>
            <person name="Zhang Z."/>
            <person name="Bailey J.A."/>
            <person name="Eichler E.E."/>
            <person name="Tuzun E."/>
            <person name="Birney E."/>
            <person name="Mongin E."/>
            <person name="Ureta-Vidal A."/>
            <person name="Woodwark C."/>
            <person name="Zdobnov E."/>
            <person name="Bork P."/>
            <person name="Suyama M."/>
            <person name="Torrents D."/>
            <person name="Alexandersson M."/>
            <person name="Trask B.J."/>
            <person name="Young J.M."/>
            <person name="Huang H."/>
            <person name="Wang H."/>
            <person name="Xing H."/>
            <person name="Daniels S."/>
            <person name="Gietzen D."/>
            <person name="Schmidt J."/>
            <person name="Stevens K."/>
            <person name="Vitt U."/>
            <person name="Wingrove J."/>
            <person name="Camara F."/>
            <person name="Mar Alba M."/>
            <person name="Abril J.F."/>
            <person name="Guigo R."/>
            <person name="Smit A."/>
            <person name="Dubchak I."/>
            <person name="Rubin E.M."/>
            <person name="Couronne O."/>
            <person name="Poliakov A."/>
            <person name="Huebner N."/>
            <person name="Ganten D."/>
            <person name="Goesele C."/>
            <person name="Hummel O."/>
            <person name="Kreitler T."/>
            <person name="Lee Y.-A."/>
            <person name="Monti J."/>
            <person name="Schulz H."/>
            <person name="Zimdahl H."/>
            <person name="Himmelbauer H."/>
            <person name="Lehrach H."/>
            <person name="Jacob H.J."/>
            <person name="Bromberg S."/>
            <person name="Gullings-Handley J."/>
            <person name="Jensen-Seaman M.I."/>
            <person name="Kwitek A.E."/>
            <person name="Lazar J."/>
            <person name="Pasko D."/>
            <person name="Tonellato P.J."/>
            <person name="Twigger S."/>
            <person name="Ponting C.P."/>
            <person name="Duarte J.M."/>
            <person name="Rice S."/>
            <person name="Goodstadt L."/>
            <person name="Beatson S.A."/>
            <person name="Emes R.D."/>
            <person name="Winter E.E."/>
            <person name="Webber C."/>
            <person name="Brandt P."/>
            <person name="Nyakatura G."/>
            <person name="Adetobi M."/>
            <person name="Chiaromonte F."/>
            <person name="Elnitski L."/>
            <person name="Eswara P."/>
            <person name="Hardison R.C."/>
            <person name="Hou M."/>
            <person name="Kolbe D."/>
            <person name="Makova K."/>
            <person name="Miller W."/>
            <person name="Nekrutenko A."/>
            <person name="Riemer C."/>
            <person name="Schwartz S."/>
            <person name="Taylor J."/>
            <person name="Yang S."/>
            <person name="Zhang Y."/>
            <person name="Lindpaintner K."/>
            <person name="Andrews T.D."/>
            <person name="Caccamo M."/>
            <person name="Clamp M."/>
            <person name="Clarke L."/>
            <person name="Curwen V."/>
            <person name="Durbin R.M."/>
            <person name="Eyras E."/>
            <person name="Searle S.M."/>
            <person name="Cooper G.M."/>
            <person name="Batzoglou S."/>
            <person name="Brudno M."/>
            <person name="Sidow A."/>
            <person name="Stone E.A."/>
            <person name="Payseur B.A."/>
            <person name="Bourque G."/>
            <person name="Lopez-Otin C."/>
            <person name="Puente X.S."/>
            <person name="Chakrabarti K."/>
            <person name="Chatterji S."/>
            <person name="Dewey C."/>
            <person name="Pachter L."/>
            <person name="Bray N."/>
            <person name="Yap V.B."/>
            <person name="Caspi A."/>
            <person name="Tesler G."/>
            <person name="Pevzner P.A."/>
            <person name="Haussler D."/>
            <person name="Roskin K.M."/>
            <person name="Baertsch R."/>
            <person name="Clawson H."/>
            <person name="Furey T.S."/>
            <person name="Hinrichs A.S."/>
            <person name="Karolchik D."/>
            <person name="Kent W.J."/>
            <person name="Rosenbloom K.R."/>
            <person name="Trumbower H."/>
            <person name="Weirauch M."/>
            <person name="Cooper D.N."/>
            <person name="Stenson P.D."/>
            <person name="Ma B."/>
            <person name="Brent M."/>
            <person name="Arumugam M."/>
            <person name="Shteynberg D."/>
            <person name="Copley R.R."/>
            <person name="Taylor M.S."/>
            <person name="Riethman H."/>
            <person name="Mudunuri U."/>
            <person name="Peterson J."/>
            <person name="Guyer M."/>
            <person name="Felsenfeld A."/>
            <person name="Old S."/>
            <person name="Mockrin S."/>
            <person name="Collins F.S."/>
        </authorList>
    </citation>
    <scope>NUCLEOTIDE SEQUENCE [LARGE SCALE GENOMIC DNA]</scope>
    <source>
        <strain>Brown Norway</strain>
    </source>
</reference>
<dbReference type="EMBL" id="AABR03042852">
    <property type="status" value="NOT_ANNOTATED_CDS"/>
    <property type="molecule type" value="Genomic_DNA"/>
</dbReference>
<dbReference type="RefSeq" id="NP_001258066.1">
    <property type="nucleotide sequence ID" value="NM_001271137.1"/>
</dbReference>
<dbReference type="SMR" id="D3ZYP5"/>
<dbReference type="FunCoup" id="D3ZYP5">
    <property type="interactions" value="124"/>
</dbReference>
<dbReference type="STRING" id="10116.ENSRNOP00000032686"/>
<dbReference type="PhosphoSitePlus" id="D3ZYP5"/>
<dbReference type="PaxDb" id="10116-ENSRNOP00000032686"/>
<dbReference type="Ensembl" id="ENSRNOT00000038888.7">
    <property type="protein sequence ID" value="ENSRNOP00000032686.6"/>
    <property type="gene ID" value="ENSRNOG00000028083.7"/>
</dbReference>
<dbReference type="GeneID" id="100361631"/>
<dbReference type="KEGG" id="rno:100361631"/>
<dbReference type="UCSC" id="RGD:2319741">
    <property type="organism name" value="rat"/>
</dbReference>
<dbReference type="AGR" id="RGD:2319741"/>
<dbReference type="CTD" id="100506144"/>
<dbReference type="RGD" id="2319741">
    <property type="gene designation" value="Tmem35b"/>
</dbReference>
<dbReference type="eggNOG" id="ENOG502RXPR">
    <property type="taxonomic scope" value="Eukaryota"/>
</dbReference>
<dbReference type="GeneTree" id="ENSGT00940000154325"/>
<dbReference type="HOGENOM" id="CLU_121618_1_0_1"/>
<dbReference type="InParanoid" id="D3ZYP5"/>
<dbReference type="OMA" id="PDPMNYQ"/>
<dbReference type="OrthoDB" id="90627at9989"/>
<dbReference type="PhylomeDB" id="D3ZYP5"/>
<dbReference type="TreeFam" id="TF300206"/>
<dbReference type="PRO" id="PR:D3ZYP5"/>
<dbReference type="Proteomes" id="UP000002494">
    <property type="component" value="Chromosome 5"/>
</dbReference>
<dbReference type="Bgee" id="ENSRNOG00000028083">
    <property type="expression patterns" value="Expressed in ovary and 19 other cell types or tissues"/>
</dbReference>
<dbReference type="GO" id="GO:0016020">
    <property type="term" value="C:membrane"/>
    <property type="evidence" value="ECO:0007669"/>
    <property type="project" value="UniProtKB-SubCell"/>
</dbReference>
<dbReference type="InterPro" id="IPR032808">
    <property type="entry name" value="DoxX"/>
</dbReference>
<dbReference type="InterPro" id="IPR040399">
    <property type="entry name" value="TMEM35A/B"/>
</dbReference>
<dbReference type="PANTHER" id="PTHR13163">
    <property type="entry name" value="SPINAL CORD EXPRESSION PROTEIN 4"/>
    <property type="match status" value="1"/>
</dbReference>
<dbReference type="PANTHER" id="PTHR13163:SF2">
    <property type="entry name" value="TRANSMEMBRANE PROTEIN 35B"/>
    <property type="match status" value="1"/>
</dbReference>
<dbReference type="Pfam" id="PF13564">
    <property type="entry name" value="DoxX_2"/>
    <property type="match status" value="1"/>
</dbReference>
<organism>
    <name type="scientific">Rattus norvegicus</name>
    <name type="common">Rat</name>
    <dbReference type="NCBI Taxonomy" id="10116"/>
    <lineage>
        <taxon>Eukaryota</taxon>
        <taxon>Metazoa</taxon>
        <taxon>Chordata</taxon>
        <taxon>Craniata</taxon>
        <taxon>Vertebrata</taxon>
        <taxon>Euteleostomi</taxon>
        <taxon>Mammalia</taxon>
        <taxon>Eutheria</taxon>
        <taxon>Euarchontoglires</taxon>
        <taxon>Glires</taxon>
        <taxon>Rodentia</taxon>
        <taxon>Myomorpha</taxon>
        <taxon>Muroidea</taxon>
        <taxon>Muridae</taxon>
        <taxon>Murinae</taxon>
        <taxon>Rattus</taxon>
    </lineage>
</organism>
<gene>
    <name evidence="3" type="primary">Tmem35b</name>
    <name type="synonym">Zmym6nb</name>
</gene>
<comment type="subcellular location">
    <subcellularLocation>
        <location evidence="2">Membrane</location>
        <topology evidence="2">Multi-pass membrane protein</topology>
    </subcellularLocation>
</comment>
<comment type="similarity">
    <text evidence="2">Belongs to the DoxX family.</text>
</comment>
<name>TM35B_RAT</name>
<sequence>MLVSLGALRVLLGIFFTLTGAAKLFQVSAPVSQQMKALFEQFAEVFPLKVLGYQPDPISYQAAVGWLELLAGLLLVVGPPVLQQISNVLLILLMMGAVFTLVVLEESLSTYIPAVVCLGLLLLLDSCQFLVRTKGAVRCRNKIPGALGNPRK</sequence>
<accession>D3ZYP5</accession>
<protein>
    <recommendedName>
        <fullName>Transmembrane protein 35B</fullName>
    </recommendedName>
    <alternativeName>
        <fullName>ZMYM6 neighbor protein</fullName>
    </alternativeName>
</protein>